<proteinExistence type="inferred from homology"/>
<keyword id="KW-1074">Activation of host NF-kappa-B by virus</keyword>
<keyword id="KW-0010">Activator</keyword>
<keyword id="KW-0053">Apoptosis</keyword>
<keyword id="KW-1035">Host cytoplasm</keyword>
<keyword id="KW-1079">Host G2/M cell cycle arrest by virus</keyword>
<keyword id="KW-1045">Host mitochondrion</keyword>
<keyword id="KW-1048">Host nucleus</keyword>
<keyword id="KW-0945">Host-virus interaction</keyword>
<keyword id="KW-1121">Modulation of host cell cycle by virus</keyword>
<keyword id="KW-0804">Transcription</keyword>
<keyword id="KW-0805">Transcription regulation</keyword>
<comment type="function">
    <text evidence="1">Multifunctional protein that plays a role in silencing host antiviral defenses and promoting viral transcription. Does not seem to be essential for HBV infection. May be directly involved in development of cirrhosis and liver cancer (hepatocellular carcinoma). Most of cytosolic activities involve modulation of cytosolic calcium. The effect on apoptosis is controversial depending on the cell types in which the studies have been conducted. May induce apoptosis by localizing in mitochondria and causing loss of mitochondrial membrane potential. May also modulate apoptosis by binding host CFLAR, a key regulator of the death-inducing signaling complex (DISC). Promotes viral transcription by using the host E3 ubiquitin ligase DDB1 to target the SMC5-SMC6 complex to proteasomal degradation. This host complex would otherwise bind to viral episomal DNA, and prevents its transcription. Moderately stimulates transcription of many different viral and cellular transcription elements. Promoters and enhancers stimulated by HBx contain DNA binding sites for NF-kappa-B, AP-1, AP-2, c-EBP, ATF/CREB, or the calcium-activated factor NF-AT.</text>
</comment>
<comment type="subunit">
    <text evidence="1">May form homodimer. May interact with host CEBPA, CFLAR, CREB1, DDB1, E4F1, HBXIP, HSPD1/HSP60, NFKBIA, POLR2E and SMAD4. Interacts with host SMC5-SMC6 complex and induces its degradation. Interacts with host TRPC4AP; leading to prevent ubiquitination of TRPC4AP. Interacts with host PLSCR1; this interaction promotes ubiquitination and degradation of HBx and impairs HBx-mediated cell proliferation.</text>
</comment>
<comment type="subcellular location">
    <subcellularLocation>
        <location evidence="1">Host cytoplasm</location>
    </subcellularLocation>
    <subcellularLocation>
        <location evidence="1">Host nucleus</location>
    </subcellularLocation>
    <subcellularLocation>
        <location evidence="1">Host mitochondrion</location>
    </subcellularLocation>
    <text evidence="1">Mainly cytoplasmic as only a fraction is detected in the nucleus. In cytoplasm, a minor fraction associates with mitochondria or proteasomes.</text>
</comment>
<comment type="PTM">
    <text evidence="1">A fraction may be phosphorylated in insect cells and HepG2 cells, a human hepatoblastoma cell line. Phosphorylated in vitro by host protein kinase C or mitogen-activated protein kinase. N-acetylated in insect cells.</text>
</comment>
<comment type="similarity">
    <text evidence="1">Belongs to the orthohepadnavirus protein X family.</text>
</comment>
<comment type="caution">
    <text>Transcriptional activities should be taken with a grain of salt. As of 2007, all studies demonstrating in vivo interaction between protein X and transcriptional components were performed with significant overexpression of both proteins and in the absence of viral infection.</text>
</comment>
<gene>
    <name evidence="1" type="primary">X</name>
</gene>
<feature type="chain" id="PRO_0000319898" description="Protein X">
    <location>
        <begin position="1"/>
        <end position="154"/>
    </location>
</feature>
<feature type="region of interest" description="Mitochondrial targeting sequence" evidence="1">
    <location>
        <begin position="68"/>
        <end position="117"/>
    </location>
</feature>
<reference key="1">
    <citation type="journal article" date="2005" name="J. Gen. Virol.">
        <title>A new subtype (subgenotype) Ac (A3) of hepatitis B virus and recombination between genotypes A and E in Cameroon.</title>
        <authorList>
            <person name="Kurbanov F."/>
            <person name="Tanaka Y."/>
            <person name="Fujiwara K."/>
            <person name="Sugauchi F."/>
            <person name="Mbanya D."/>
            <person name="Zekeng L."/>
            <person name="Ndembi N."/>
            <person name="Ngansop C."/>
            <person name="Kaptue L."/>
            <person name="Miura T."/>
            <person name="Ido E."/>
            <person name="Hayami M."/>
            <person name="Ichimura H."/>
            <person name="Mizokami M."/>
        </authorList>
    </citation>
    <scope>NUCLEOTIDE SEQUENCE [GENOMIC DNA]</scope>
</reference>
<reference key="2">
    <citation type="journal article" date="2004" name="J. Virol.">
        <title>The enigmatic X gene of hepatitis B virus.</title>
        <authorList>
            <person name="Bouchard M.J."/>
            <person name="Schneider R.J."/>
        </authorList>
    </citation>
    <scope>REVIEW</scope>
</reference>
<reference key="3">
    <citation type="journal article" date="2006" name="Cancer Sci.">
        <title>Molecular functions and biological roles of hepatitis B virus x protein.</title>
        <authorList>
            <person name="Tang H."/>
            <person name="Oishi N."/>
            <person name="Kaneko S."/>
            <person name="Murakami S."/>
        </authorList>
    </citation>
    <scope>REVIEW</scope>
</reference>
<sequence length="154" mass="16641">MAARLYCQLDSSRNVLCLRPVGAESCGRPLSGPVGTLSSPSPSAVPTDHGAHLSLRGLPVCAFSSAGPCALRFTSARCMETTVNAHQILPKVLYKRTLGLPAMSTTDLEAYFKDCVFKDWEELGEEIRLKIFVLGGCRHKLVCAPFSCNFFTSA</sequence>
<organismHost>
    <name type="scientific">Homo sapiens</name>
    <name type="common">Human</name>
    <dbReference type="NCBI Taxonomy" id="9606"/>
</organismHost>
<organismHost>
    <name type="scientific">Pan troglodytes</name>
    <name type="common">Chimpanzee</name>
    <dbReference type="NCBI Taxonomy" id="9598"/>
</organismHost>
<accession>Q4R1S1</accession>
<name>X_HBVA9</name>
<protein>
    <recommendedName>
        <fullName evidence="1">Protein X</fullName>
    </recommendedName>
    <alternativeName>
        <fullName evidence="1">HBx</fullName>
    </alternativeName>
    <alternativeName>
        <fullName evidence="1">Peptide X</fullName>
    </alternativeName>
    <alternativeName>
        <fullName evidence="1">pX</fullName>
    </alternativeName>
</protein>
<organism>
    <name type="scientific">Hepatitis B virus genotype A3 (isolate Cameroon/CMR711/1994)</name>
    <name type="common">HBV-A</name>
    <dbReference type="NCBI Taxonomy" id="489459"/>
    <lineage>
        <taxon>Viruses</taxon>
        <taxon>Riboviria</taxon>
        <taxon>Pararnavirae</taxon>
        <taxon>Artverviricota</taxon>
        <taxon>Revtraviricetes</taxon>
        <taxon>Blubervirales</taxon>
        <taxon>Hepadnaviridae</taxon>
        <taxon>Orthohepadnavirus</taxon>
        <taxon>Hepatitis B virus</taxon>
    </lineage>
</organism>
<evidence type="ECO:0000255" key="1">
    <source>
        <dbReference type="HAMAP-Rule" id="MF_04074"/>
    </source>
</evidence>
<dbReference type="EMBL" id="AB194952">
    <property type="protein sequence ID" value="BAE00095.1"/>
    <property type="molecule type" value="Genomic_DNA"/>
</dbReference>
<dbReference type="SMR" id="Q4R1S1"/>
<dbReference type="Proteomes" id="UP000007912">
    <property type="component" value="Genome"/>
</dbReference>
<dbReference type="GO" id="GO:0033650">
    <property type="term" value="C:host cell mitochondrion"/>
    <property type="evidence" value="ECO:0007669"/>
    <property type="project" value="UniProtKB-SubCell"/>
</dbReference>
<dbReference type="GO" id="GO:0042025">
    <property type="term" value="C:host cell nucleus"/>
    <property type="evidence" value="ECO:0007669"/>
    <property type="project" value="UniProtKB-SubCell"/>
</dbReference>
<dbReference type="GO" id="GO:0006351">
    <property type="term" value="P:DNA-templated transcription"/>
    <property type="evidence" value="ECO:0007669"/>
    <property type="project" value="UniProtKB-UniRule"/>
</dbReference>
<dbReference type="GO" id="GO:0085033">
    <property type="term" value="P:symbiont-mediated activation of host NF-kappaB cascade"/>
    <property type="evidence" value="ECO:0007669"/>
    <property type="project" value="UniProtKB-UniRule"/>
</dbReference>
<dbReference type="GO" id="GO:0039592">
    <property type="term" value="P:symbiont-mediated arrest of host cell cycle during G2/M transition"/>
    <property type="evidence" value="ECO:0007669"/>
    <property type="project" value="UniProtKB-UniRule"/>
</dbReference>
<dbReference type="GO" id="GO:0019079">
    <property type="term" value="P:viral genome replication"/>
    <property type="evidence" value="ECO:0007669"/>
    <property type="project" value="UniProtKB-UniRule"/>
</dbReference>
<dbReference type="HAMAP" id="MF_04074">
    <property type="entry name" value="HBV_X"/>
    <property type="match status" value="1"/>
</dbReference>
<dbReference type="InterPro" id="IPR000236">
    <property type="entry name" value="Transactivation_prot_X"/>
</dbReference>
<dbReference type="Pfam" id="PF00739">
    <property type="entry name" value="X"/>
    <property type="match status" value="1"/>
</dbReference>